<proteinExistence type="evidence at protein level"/>
<name>SRC30_ARATH</name>
<reference key="1">
    <citation type="journal article" date="2002" name="J. Biol. Chem.">
        <title>Network of interactions of a novel plant-specific Arg/Ser-rich protein, atRSZ33, with atSC35-like splicing factors.</title>
        <authorList>
            <person name="Lopato S."/>
            <person name="Forstner C."/>
            <person name="Kalyna M."/>
            <person name="Hilscher J."/>
            <person name="Langhammer U."/>
            <person name="Korakod L."/>
            <person name="Zdravko J."/>
            <person name="Barta A."/>
        </authorList>
    </citation>
    <scope>NUCLEOTIDE SEQUENCE [MRNA]</scope>
    <scope>INTERACTION WITH RS2Z33</scope>
</reference>
<reference key="2">
    <citation type="journal article" date="2000" name="Nature">
        <title>Sequence and analysis of chromosome 3 of the plant Arabidopsis thaliana.</title>
        <authorList>
            <person name="Salanoubat M."/>
            <person name="Lemcke K."/>
            <person name="Rieger M."/>
            <person name="Ansorge W."/>
            <person name="Unseld M."/>
            <person name="Fartmann B."/>
            <person name="Valle G."/>
            <person name="Bloecker H."/>
            <person name="Perez-Alonso M."/>
            <person name="Obermaier B."/>
            <person name="Delseny M."/>
            <person name="Boutry M."/>
            <person name="Grivell L.A."/>
            <person name="Mache R."/>
            <person name="Puigdomenech P."/>
            <person name="De Simone V."/>
            <person name="Choisne N."/>
            <person name="Artiguenave F."/>
            <person name="Robert C."/>
            <person name="Brottier P."/>
            <person name="Wincker P."/>
            <person name="Cattolico L."/>
            <person name="Weissenbach J."/>
            <person name="Saurin W."/>
            <person name="Quetier F."/>
            <person name="Schaefer M."/>
            <person name="Mueller-Auer S."/>
            <person name="Gabel C."/>
            <person name="Fuchs M."/>
            <person name="Benes V."/>
            <person name="Wurmbach E."/>
            <person name="Drzonek H."/>
            <person name="Erfle H."/>
            <person name="Jordan N."/>
            <person name="Bangert S."/>
            <person name="Wiedelmann R."/>
            <person name="Kranz H."/>
            <person name="Voss H."/>
            <person name="Holland R."/>
            <person name="Brandt P."/>
            <person name="Nyakatura G."/>
            <person name="Vezzi A."/>
            <person name="D'Angelo M."/>
            <person name="Pallavicini A."/>
            <person name="Toppo S."/>
            <person name="Simionati B."/>
            <person name="Conrad A."/>
            <person name="Hornischer K."/>
            <person name="Kauer G."/>
            <person name="Loehnert T.-H."/>
            <person name="Nordsiek G."/>
            <person name="Reichelt J."/>
            <person name="Scharfe M."/>
            <person name="Schoen O."/>
            <person name="Bargues M."/>
            <person name="Terol J."/>
            <person name="Climent J."/>
            <person name="Navarro P."/>
            <person name="Collado C."/>
            <person name="Perez-Perez A."/>
            <person name="Ottenwaelder B."/>
            <person name="Duchemin D."/>
            <person name="Cooke R."/>
            <person name="Laudie M."/>
            <person name="Berger-Llauro C."/>
            <person name="Purnelle B."/>
            <person name="Masuy D."/>
            <person name="de Haan M."/>
            <person name="Maarse A.C."/>
            <person name="Alcaraz J.-P."/>
            <person name="Cottet A."/>
            <person name="Casacuberta E."/>
            <person name="Monfort A."/>
            <person name="Argiriou A."/>
            <person name="Flores M."/>
            <person name="Liguori R."/>
            <person name="Vitale D."/>
            <person name="Mannhaupt G."/>
            <person name="Haase D."/>
            <person name="Schoof H."/>
            <person name="Rudd S."/>
            <person name="Zaccaria P."/>
            <person name="Mewes H.-W."/>
            <person name="Mayer K.F.X."/>
            <person name="Kaul S."/>
            <person name="Town C.D."/>
            <person name="Koo H.L."/>
            <person name="Tallon L.J."/>
            <person name="Jenkins J."/>
            <person name="Rooney T."/>
            <person name="Rizzo M."/>
            <person name="Walts A."/>
            <person name="Utterback T."/>
            <person name="Fujii C.Y."/>
            <person name="Shea T.P."/>
            <person name="Creasy T.H."/>
            <person name="Haas B."/>
            <person name="Maiti R."/>
            <person name="Wu D."/>
            <person name="Peterson J."/>
            <person name="Van Aken S."/>
            <person name="Pai G."/>
            <person name="Militscher J."/>
            <person name="Sellers P."/>
            <person name="Gill J.E."/>
            <person name="Feldblyum T.V."/>
            <person name="Preuss D."/>
            <person name="Lin X."/>
            <person name="Nierman W.C."/>
            <person name="Salzberg S.L."/>
            <person name="White O."/>
            <person name="Venter J.C."/>
            <person name="Fraser C.M."/>
            <person name="Kaneko T."/>
            <person name="Nakamura Y."/>
            <person name="Sato S."/>
            <person name="Kato T."/>
            <person name="Asamizu E."/>
            <person name="Sasamoto S."/>
            <person name="Kimura T."/>
            <person name="Idesawa K."/>
            <person name="Kawashima K."/>
            <person name="Kishida Y."/>
            <person name="Kiyokawa C."/>
            <person name="Kohara M."/>
            <person name="Matsumoto M."/>
            <person name="Matsuno A."/>
            <person name="Muraki A."/>
            <person name="Nakayama S."/>
            <person name="Nakazaki N."/>
            <person name="Shinpo S."/>
            <person name="Takeuchi C."/>
            <person name="Wada T."/>
            <person name="Watanabe A."/>
            <person name="Yamada M."/>
            <person name="Yasuda M."/>
            <person name="Tabata S."/>
        </authorList>
    </citation>
    <scope>NUCLEOTIDE SEQUENCE [LARGE SCALE GENOMIC DNA]</scope>
    <source>
        <strain>cv. Columbia</strain>
    </source>
</reference>
<reference key="3">
    <citation type="journal article" date="2017" name="Plant J.">
        <title>Araport11: a complete reannotation of the Arabidopsis thaliana reference genome.</title>
        <authorList>
            <person name="Cheng C.Y."/>
            <person name="Krishnakumar V."/>
            <person name="Chan A.P."/>
            <person name="Thibaud-Nissen F."/>
            <person name="Schobel S."/>
            <person name="Town C.D."/>
        </authorList>
    </citation>
    <scope>GENOME REANNOTATION</scope>
    <source>
        <strain>cv. Columbia</strain>
    </source>
</reference>
<reference key="4">
    <citation type="journal article" date="2003" name="Science">
        <title>Empirical analysis of transcriptional activity in the Arabidopsis genome.</title>
        <authorList>
            <person name="Yamada K."/>
            <person name="Lim J."/>
            <person name="Dale J.M."/>
            <person name="Chen H."/>
            <person name="Shinn P."/>
            <person name="Palm C.J."/>
            <person name="Southwick A.M."/>
            <person name="Wu H.C."/>
            <person name="Kim C.J."/>
            <person name="Nguyen M."/>
            <person name="Pham P.K."/>
            <person name="Cheuk R.F."/>
            <person name="Karlin-Newmann G."/>
            <person name="Liu S.X."/>
            <person name="Lam B."/>
            <person name="Sakano H."/>
            <person name="Wu T."/>
            <person name="Yu G."/>
            <person name="Miranda M."/>
            <person name="Quach H.L."/>
            <person name="Tripp M."/>
            <person name="Chang C.H."/>
            <person name="Lee J.M."/>
            <person name="Toriumi M.J."/>
            <person name="Chan M.M."/>
            <person name="Tang C.C."/>
            <person name="Onodera C.S."/>
            <person name="Deng J.M."/>
            <person name="Akiyama K."/>
            <person name="Ansari Y."/>
            <person name="Arakawa T."/>
            <person name="Banh J."/>
            <person name="Banno F."/>
            <person name="Bowser L."/>
            <person name="Brooks S.Y."/>
            <person name="Carninci P."/>
            <person name="Chao Q."/>
            <person name="Choy N."/>
            <person name="Enju A."/>
            <person name="Goldsmith A.D."/>
            <person name="Gurjal M."/>
            <person name="Hansen N.F."/>
            <person name="Hayashizaki Y."/>
            <person name="Johnson-Hopson C."/>
            <person name="Hsuan V.W."/>
            <person name="Iida K."/>
            <person name="Karnes M."/>
            <person name="Khan S."/>
            <person name="Koesema E."/>
            <person name="Ishida J."/>
            <person name="Jiang P.X."/>
            <person name="Jones T."/>
            <person name="Kawai J."/>
            <person name="Kamiya A."/>
            <person name="Meyers C."/>
            <person name="Nakajima M."/>
            <person name="Narusaka M."/>
            <person name="Seki M."/>
            <person name="Sakurai T."/>
            <person name="Satou M."/>
            <person name="Tamse R."/>
            <person name="Vaysberg M."/>
            <person name="Wallender E.K."/>
            <person name="Wong C."/>
            <person name="Yamamura Y."/>
            <person name="Yuan S."/>
            <person name="Shinozaki K."/>
            <person name="Davis R.W."/>
            <person name="Theologis A."/>
            <person name="Ecker J.R."/>
        </authorList>
    </citation>
    <scope>NUCLEOTIDE SEQUENCE [LARGE SCALE MRNA]</scope>
    <source>
        <strain>cv. Columbia</strain>
    </source>
</reference>
<reference key="5">
    <citation type="submission" date="2002-03" db="EMBL/GenBank/DDBJ databases">
        <title>Full-length cDNA from Arabidopsis thaliana.</title>
        <authorList>
            <person name="Brover V.V."/>
            <person name="Troukhan M.E."/>
            <person name="Alexandrov N.A."/>
            <person name="Lu Y.-P."/>
            <person name="Flavell R.B."/>
            <person name="Feldmann K.A."/>
        </authorList>
    </citation>
    <scope>NUCLEOTIDE SEQUENCE [LARGE SCALE MRNA]</scope>
</reference>
<reference key="6">
    <citation type="journal article" date="2004" name="J. Biol. Chem.">
        <title>Interactions of Arabidopsis RS domain containing cyclophilins with SR proteins and U1 and U11 small nuclear ribonucleoprotein-specific proteins suggest their involvement in pre-mRNA Splicing.</title>
        <authorList>
            <person name="Lorkovic Z.J."/>
            <person name="Lopato S."/>
            <person name="Pexa M."/>
            <person name="Lehner R."/>
            <person name="Barta A."/>
        </authorList>
    </citation>
    <scope>INTERACTION WITH CYP63 AND CYP95</scope>
    <scope>PHOSPHORYLATION</scope>
</reference>
<reference key="7">
    <citation type="journal article" date="2004" name="Mol. Biol. Cell">
        <title>Use of fluorescent protein tags to study nuclear organization of the spliceosomal machinery in transiently transformed living plant cells.</title>
        <authorList>
            <person name="Lorkovic Z.J."/>
            <person name="Hilscher J."/>
            <person name="Barta A."/>
        </authorList>
    </citation>
    <scope>SUBCELLULAR LOCATION</scope>
</reference>
<reference key="8">
    <citation type="journal article" date="2006" name="Mol. Biol. Evol.">
        <title>Survey of conserved alternative splicing events of mRNAs encoding SR proteins in land plants.</title>
        <authorList>
            <person name="Iida K."/>
            <person name="Go M."/>
        </authorList>
    </citation>
    <scope>ALTERNATIVE SPLICING</scope>
</reference>
<reference key="9">
    <citation type="journal article" date="2006" name="Nucleic Acids Res.">
        <title>Phosphoproteomics reveals extensive in vivo phosphorylation of Arabidopsis proteins involved in RNA metabolism.</title>
        <authorList>
            <person name="de la Fuente van Bentem S."/>
            <person name="Anrather D."/>
            <person name="Roitinger E."/>
            <person name="Djamei A."/>
            <person name="Hufnagl T."/>
            <person name="Barta A."/>
            <person name="Csaszar E."/>
            <person name="Dohnal I."/>
            <person name="Lecourieux D."/>
            <person name="Hirt H."/>
        </authorList>
    </citation>
    <scope>PHOSPHORYLATION [LARGE SCALE ANALYSIS] AT SER-5; SER-10; SER-22; SER-204; SER-206; SER-256 AND SER-260</scope>
    <scope>IDENTIFICATION BY MASS SPECTROMETRY [LARGE SCALE ANALYSIS]</scope>
</reference>
<reference key="10">
    <citation type="journal article" date="2006" name="RNA">
        <title>AtCyp59 is a multidomain cyclophilin from Arabidopsis thaliana that interacts with SR proteins and the C-terminal domain of the RNA polymerase II.</title>
        <authorList>
            <person name="Gullerova M."/>
            <person name="Barta A."/>
            <person name="Lorkovic Z.J."/>
        </authorList>
    </citation>
    <scope>INTERACTION WITH CYP59</scope>
</reference>
<reference key="11">
    <citation type="journal article" date="2007" name="Plant J.">
        <title>Alternative splicing of pre-mRNAs of Arabidopsis serine/arginine-rich proteins: regulation by hormones and stresses.</title>
        <authorList>
            <person name="Palusa S.G."/>
            <person name="Ali G.S."/>
            <person name="Reddy A.S."/>
        </authorList>
    </citation>
    <scope>ALTERNATIVE SPLICING</scope>
    <scope>INDUCTION</scope>
</reference>
<reference key="12">
    <citation type="journal article" date="2009" name="J. Proteomics">
        <title>Phosphoproteomic analysis of nuclei-enriched fractions from Arabidopsis thaliana.</title>
        <authorList>
            <person name="Jones A.M.E."/>
            <person name="MacLean D."/>
            <person name="Studholme D.J."/>
            <person name="Serna-Sanz A."/>
            <person name="Andreasson E."/>
            <person name="Rathjen J.P."/>
            <person name="Peck S.C."/>
        </authorList>
    </citation>
    <scope>PHOSPHORYLATION [LARGE SCALE ANALYSIS] AT TYR-209</scope>
    <scope>IDENTIFICATION BY MASS SPECTROMETRY [LARGE SCALE ANALYSIS]</scope>
    <source>
        <strain>cv. Columbia</strain>
    </source>
</reference>
<reference key="13">
    <citation type="journal article" date="2009" name="Plant Physiol.">
        <title>Large-scale Arabidopsis phosphoproteome profiling reveals novel chloroplast kinase substrates and phosphorylation networks.</title>
        <authorList>
            <person name="Reiland S."/>
            <person name="Messerli G."/>
            <person name="Baerenfaller K."/>
            <person name="Gerrits B."/>
            <person name="Endler A."/>
            <person name="Grossmann J."/>
            <person name="Gruissem W."/>
            <person name="Baginsky S."/>
        </authorList>
    </citation>
    <scope>IDENTIFICATION BY MASS SPECTROMETRY [LARGE SCALE ANALYSIS]</scope>
</reference>
<reference key="14">
    <citation type="journal article" date="2010" name="Plant Cell">
        <title>Implementing a rational and consistent nomenclature for serine/arginine-rich protein splicing factors (SR proteins) in plants.</title>
        <authorList>
            <person name="Barta A."/>
            <person name="Kalyna M."/>
            <person name="Reddy A.S."/>
        </authorList>
    </citation>
    <scope>GENE FAMILY</scope>
    <scope>NOMENCLATURE</scope>
</reference>
<reference key="15">
    <citation type="journal article" date="2011" name="PLoS ONE">
        <title>Comparative analysis of serine/arginine-rich proteins across 27 eukaryotes: insights into sub-family classification and extent of alternative splicing.</title>
        <authorList>
            <person name="Richardson D.N."/>
            <person name="Rogers M.F."/>
            <person name="Labadorf A."/>
            <person name="Ben-Hur A."/>
            <person name="Guo H."/>
            <person name="Paterson A.H."/>
            <person name="Reddy A.S.N."/>
        </authorList>
    </citation>
    <scope>GENE FAMILY</scope>
</reference>
<organism>
    <name type="scientific">Arabidopsis thaliana</name>
    <name type="common">Mouse-ear cress</name>
    <dbReference type="NCBI Taxonomy" id="3702"/>
    <lineage>
        <taxon>Eukaryota</taxon>
        <taxon>Viridiplantae</taxon>
        <taxon>Streptophyta</taxon>
        <taxon>Embryophyta</taxon>
        <taxon>Tracheophyta</taxon>
        <taxon>Spermatophyta</taxon>
        <taxon>Magnoliopsida</taxon>
        <taxon>eudicotyledons</taxon>
        <taxon>Gunneridae</taxon>
        <taxon>Pentapetalae</taxon>
        <taxon>rosids</taxon>
        <taxon>malvids</taxon>
        <taxon>Brassicales</taxon>
        <taxon>Brassicaceae</taxon>
        <taxon>Camelineae</taxon>
        <taxon>Arabidopsis</taxon>
    </lineage>
</organism>
<dbReference type="EMBL" id="AJ293798">
    <property type="protein sequence ID" value="CAC03602.1"/>
    <property type="molecule type" value="mRNA"/>
</dbReference>
<dbReference type="EMBL" id="AL132975">
    <property type="protein sequence ID" value="CAB75904.1"/>
    <property type="status" value="ALT_SEQ"/>
    <property type="molecule type" value="Genomic_DNA"/>
</dbReference>
<dbReference type="EMBL" id="CP002686">
    <property type="protein sequence ID" value="AEE79387.1"/>
    <property type="molecule type" value="Genomic_DNA"/>
</dbReference>
<dbReference type="EMBL" id="AY099649">
    <property type="protein sequence ID" value="AAM20500.1"/>
    <property type="molecule type" value="mRNA"/>
</dbReference>
<dbReference type="EMBL" id="AY128836">
    <property type="protein sequence ID" value="AAM91236.1"/>
    <property type="molecule type" value="mRNA"/>
</dbReference>
<dbReference type="EMBL" id="AY086131">
    <property type="protein sequence ID" value="AAM63336.1"/>
    <property type="molecule type" value="mRNA"/>
</dbReference>
<dbReference type="PIR" id="T47685">
    <property type="entry name" value="T47685"/>
</dbReference>
<dbReference type="RefSeq" id="NP_567021.1">
    <molecule id="Q8L3X8-1"/>
    <property type="nucleotide sequence ID" value="NM_115404.6"/>
</dbReference>
<dbReference type="SMR" id="Q8L3X8"/>
<dbReference type="BioGRID" id="10028">
    <property type="interactions" value="21"/>
</dbReference>
<dbReference type="FunCoup" id="Q8L3X8">
    <property type="interactions" value="1322"/>
</dbReference>
<dbReference type="IntAct" id="Q8L3X8">
    <property type="interactions" value="20"/>
</dbReference>
<dbReference type="STRING" id="3702.Q8L3X8"/>
<dbReference type="iPTMnet" id="Q8L3X8"/>
<dbReference type="PaxDb" id="3702-AT3G55460.1"/>
<dbReference type="ProteomicsDB" id="226863">
    <molecule id="Q8L3X8-1"/>
</dbReference>
<dbReference type="EnsemblPlants" id="AT3G55460.1">
    <molecule id="Q8L3X8-1"/>
    <property type="protein sequence ID" value="AT3G55460.1"/>
    <property type="gene ID" value="AT3G55460"/>
</dbReference>
<dbReference type="GeneID" id="824712"/>
<dbReference type="Gramene" id="AT3G55460.1">
    <molecule id="Q8L3X8-1"/>
    <property type="protein sequence ID" value="AT3G55460.1"/>
    <property type="gene ID" value="AT3G55460"/>
</dbReference>
<dbReference type="KEGG" id="ath:AT3G55460"/>
<dbReference type="Araport" id="AT3G55460"/>
<dbReference type="TAIR" id="AT3G55460">
    <property type="gene designation" value="SCL30"/>
</dbReference>
<dbReference type="eggNOG" id="KOG0118">
    <property type="taxonomic scope" value="Eukaryota"/>
</dbReference>
<dbReference type="HOGENOM" id="CLU_012062_10_1_1"/>
<dbReference type="InParanoid" id="Q8L3X8"/>
<dbReference type="OMA" id="ADRGQWK"/>
<dbReference type="OrthoDB" id="439808at2759"/>
<dbReference type="CD-CODE" id="4299E36E">
    <property type="entry name" value="Nucleolus"/>
</dbReference>
<dbReference type="CD-CODE" id="9A8A194B">
    <property type="entry name" value="Nuclear speckle"/>
</dbReference>
<dbReference type="PRO" id="PR:Q8L3X8"/>
<dbReference type="Proteomes" id="UP000006548">
    <property type="component" value="Chromosome 3"/>
</dbReference>
<dbReference type="ExpressionAtlas" id="Q8L3X8">
    <property type="expression patterns" value="baseline and differential"/>
</dbReference>
<dbReference type="GO" id="GO:0005829">
    <property type="term" value="C:cytosol"/>
    <property type="evidence" value="ECO:0007005"/>
    <property type="project" value="TAIR"/>
</dbReference>
<dbReference type="GO" id="GO:0016607">
    <property type="term" value="C:nuclear speck"/>
    <property type="evidence" value="ECO:0000314"/>
    <property type="project" value="TAIR"/>
</dbReference>
<dbReference type="GO" id="GO:0005681">
    <property type="term" value="C:spliceosomal complex"/>
    <property type="evidence" value="ECO:0007669"/>
    <property type="project" value="UniProtKB-KW"/>
</dbReference>
<dbReference type="GO" id="GO:0042802">
    <property type="term" value="F:identical protein binding"/>
    <property type="evidence" value="ECO:0000353"/>
    <property type="project" value="IntAct"/>
</dbReference>
<dbReference type="GO" id="GO:0003729">
    <property type="term" value="F:mRNA binding"/>
    <property type="evidence" value="ECO:0007005"/>
    <property type="project" value="TAIR"/>
</dbReference>
<dbReference type="GO" id="GO:0000398">
    <property type="term" value="P:mRNA splicing, via spliceosome"/>
    <property type="evidence" value="ECO:0000304"/>
    <property type="project" value="TAIR"/>
</dbReference>
<dbReference type="GO" id="GO:0008380">
    <property type="term" value="P:RNA splicing"/>
    <property type="evidence" value="ECO:0000303"/>
    <property type="project" value="TAIR"/>
</dbReference>
<dbReference type="Gene3D" id="3.30.70.330">
    <property type="match status" value="1"/>
</dbReference>
<dbReference type="InterPro" id="IPR012677">
    <property type="entry name" value="Nucleotide-bd_a/b_plait_sf"/>
</dbReference>
<dbReference type="InterPro" id="IPR035979">
    <property type="entry name" value="RBD_domain_sf"/>
</dbReference>
<dbReference type="InterPro" id="IPR050441">
    <property type="entry name" value="RBM"/>
</dbReference>
<dbReference type="InterPro" id="IPR000504">
    <property type="entry name" value="RRM_dom"/>
</dbReference>
<dbReference type="PANTHER" id="PTHR48034">
    <property type="entry name" value="TRANSFORMER-2 SEX-DETERMINING PROTEIN-RELATED"/>
    <property type="match status" value="1"/>
</dbReference>
<dbReference type="Pfam" id="PF00076">
    <property type="entry name" value="RRM_1"/>
    <property type="match status" value="1"/>
</dbReference>
<dbReference type="SMART" id="SM00360">
    <property type="entry name" value="RRM"/>
    <property type="match status" value="1"/>
</dbReference>
<dbReference type="SUPFAM" id="SSF54928">
    <property type="entry name" value="RNA-binding domain, RBD"/>
    <property type="match status" value="1"/>
</dbReference>
<dbReference type="PROSITE" id="PS50102">
    <property type="entry name" value="RRM"/>
    <property type="match status" value="1"/>
</dbReference>
<feature type="chain" id="PRO_0000429600" description="Serine/arginine-rich SC35-like splicing factor SCL30">
    <location>
        <begin position="1"/>
        <end position="262"/>
    </location>
</feature>
<feature type="domain" description="RRM" evidence="3">
    <location>
        <begin position="47"/>
        <end position="125"/>
    </location>
</feature>
<feature type="region of interest" description="Disordered" evidence="4">
    <location>
        <begin position="1"/>
        <end position="48"/>
    </location>
</feature>
<feature type="region of interest" description="Disordered" evidence="4">
    <location>
        <begin position="123"/>
        <end position="262"/>
    </location>
</feature>
<feature type="compositionally biased region" description="Low complexity" evidence="4">
    <location>
        <begin position="1"/>
        <end position="14"/>
    </location>
</feature>
<feature type="compositionally biased region" description="Gly residues" evidence="4">
    <location>
        <begin position="31"/>
        <end position="42"/>
    </location>
</feature>
<feature type="compositionally biased region" description="Basic and acidic residues" evidence="4">
    <location>
        <begin position="125"/>
        <end position="152"/>
    </location>
</feature>
<feature type="compositionally biased region" description="Basic residues" evidence="4">
    <location>
        <begin position="153"/>
        <end position="167"/>
    </location>
</feature>
<feature type="compositionally biased region" description="Basic and acidic residues" evidence="4">
    <location>
        <begin position="217"/>
        <end position="239"/>
    </location>
</feature>
<feature type="compositionally biased region" description="Low complexity" evidence="4">
    <location>
        <begin position="243"/>
        <end position="262"/>
    </location>
</feature>
<feature type="modified residue" description="Phosphoserine" evidence="11">
    <location>
        <position position="5"/>
    </location>
</feature>
<feature type="modified residue" description="Phosphoserine" evidence="11">
    <location>
        <position position="10"/>
    </location>
</feature>
<feature type="modified residue" description="Phosphoserine" evidence="11">
    <location>
        <position position="22"/>
    </location>
</feature>
<feature type="modified residue" description="Phosphoserine" evidence="2">
    <location>
        <position position="182"/>
    </location>
</feature>
<feature type="modified residue" description="Phosphoserine" evidence="11">
    <location>
        <position position="204"/>
    </location>
</feature>
<feature type="modified residue" description="Phosphoserine" evidence="11">
    <location>
        <position position="206"/>
    </location>
</feature>
<feature type="modified residue" description="Phosphotyrosine" evidence="12">
    <location>
        <position position="209"/>
    </location>
</feature>
<feature type="modified residue" description="Phosphoserine" evidence="1">
    <location>
        <position position="254"/>
    </location>
</feature>
<feature type="modified residue" description="Phosphoserine" evidence="11">
    <location>
        <position position="256"/>
    </location>
</feature>
<feature type="modified residue" description="Phosphoserine" evidence="11">
    <location>
        <position position="260"/>
    </location>
</feature>
<feature type="sequence conflict" description="In Ref. 1; CAC03602." evidence="9" ref="1">
    <original>A</original>
    <variation>S</variation>
    <location>
        <position position="114"/>
    </location>
</feature>
<sequence length="262" mass="29567">MRRYSPPYYSPPRRGYGGRGRSPPPPPPRRGYGGGGGGGGRRGSSHGSLLVRNIPLDCRPEELREPFERFGPVRDVYIPRDYYSGQPRGFAFVEFVDAYDAGEAQRSMNRRSFAGREITVVVASESRKRPEEMRVKTRTRSREPSGSRDRSHGRSRSRSISRSRSPRRPSDSRSRYRSRSYSPAPRRRGGPPRGEEDENYSRRSYSPGYEGAAAAAPDRDRNGDNEIREKPGYEAEDRRRGGRAVSRSPSGSRSRSVEVSPR</sequence>
<protein>
    <recommendedName>
        <fullName>Serine/arginine-rich SC35-like splicing factor SCL30</fullName>
        <shortName>At-SCL30</shortName>
        <shortName>AtSCL30</shortName>
    </recommendedName>
    <alternativeName>
        <fullName>SC35-like splicing factor 30</fullName>
    </alternativeName>
    <alternativeName>
        <fullName>Serine/arginine-rich splicing factor 30</fullName>
    </alternativeName>
</protein>
<comment type="function">
    <text evidence="9">Involved in intron recognition and spliceosome assembly (Probable). Probably active at the 5' splice sites.</text>
</comment>
<comment type="subunit">
    <text evidence="5 7 8">Component of the spliceosome. Interacts with RS2Z33, CYP59, CYP63 and CYP95.</text>
</comment>
<comment type="interaction">
    <interactant intactId="EBI-927061">
        <id>Q8L3X8</id>
    </interactant>
    <interactant intactId="EBI-2360522">
        <id>Q9LY75</id>
        <label>CYP63</label>
    </interactant>
    <organismsDiffer>false</organismsDiffer>
    <experiments>4</experiments>
</comment>
<comment type="interaction">
    <interactant intactId="EBI-927061">
        <id>Q8L3X8</id>
    </interactant>
    <interactant intactId="EBI-927052">
        <id>Q1PDV2</id>
        <label>SCL28</label>
    </interactant>
    <organismsDiffer>false</organismsDiffer>
    <experiments>3</experiments>
</comment>
<comment type="interaction">
    <interactant intactId="EBI-927061">
        <id>Q8L3X8</id>
    </interactant>
    <interactant intactId="EBI-927061">
        <id>Q8L3X8</id>
        <label>SCL30</label>
    </interactant>
    <organismsDiffer>false</organismsDiffer>
    <experiments>2</experiments>
</comment>
<comment type="interaction">
    <interactant intactId="EBI-927061">
        <id>Q8L3X8</id>
    </interactant>
    <interactant intactId="EBI-927082">
        <id>Q9LHP2</id>
        <label>SCL30A</label>
    </interactant>
    <organismsDiffer>false</organismsDiffer>
    <experiments>3</experiments>
</comment>
<comment type="interaction">
    <interactant intactId="EBI-927061">
        <id>Q8L3X8</id>
    </interactant>
    <interactant intactId="EBI-927038">
        <id>Q8VY74</id>
        <label>SNRNP35</label>
    </interactant>
    <organismsDiffer>false</organismsDiffer>
    <experiments>2</experiments>
</comment>
<comment type="subcellular location">
    <subcellularLocation>
        <location evidence="6">Nucleus speckle</location>
    </subcellularLocation>
</comment>
<comment type="alternative products">
    <event type="alternative splicing"/>
    <isoform>
        <id>Q8L3X8-1</id>
        <name>1</name>
        <sequence type="displayed"/>
    </isoform>
    <text>A number of isoforms are produced. According to EST sequences.</text>
</comment>
<comment type="PTM">
    <text evidence="7">Phosphorylated.</text>
</comment>
<comment type="miscellaneous">
    <text evidence="10">The splicing pattern of the pre-mRNA is regulated in a tissue-specific manner and by development, and changes in response to various types of abiotic stresses.</text>
</comment>
<comment type="similarity">
    <text evidence="9">Belongs to the splicing factor SR family. SCL subfamily.</text>
</comment>
<comment type="sequence caution" evidence="9">
    <conflict type="erroneous gene model prediction">
        <sequence resource="EMBL-CDS" id="CAB75904"/>
    </conflict>
</comment>
<accession>Q8L3X8</accession>
<accession>Q9FYA9</accession>
<accession>Q9M2T3</accession>
<gene>
    <name type="primary">SCL30</name>
    <name type="ordered locus">At3g55460</name>
    <name type="ORF">T22E16.120</name>
</gene>
<evidence type="ECO:0000250" key="1">
    <source>
        <dbReference type="UniProtKB" id="Q9FMG4"/>
    </source>
</evidence>
<evidence type="ECO:0000250" key="2">
    <source>
        <dbReference type="UniProtKB" id="Q9LHP2"/>
    </source>
</evidence>
<evidence type="ECO:0000255" key="3">
    <source>
        <dbReference type="PROSITE-ProRule" id="PRU00176"/>
    </source>
</evidence>
<evidence type="ECO:0000256" key="4">
    <source>
        <dbReference type="SAM" id="MobiDB-lite"/>
    </source>
</evidence>
<evidence type="ECO:0000269" key="5">
    <source>
    </source>
</evidence>
<evidence type="ECO:0000269" key="6">
    <source>
    </source>
</evidence>
<evidence type="ECO:0000269" key="7">
    <source>
    </source>
</evidence>
<evidence type="ECO:0000269" key="8">
    <source>
    </source>
</evidence>
<evidence type="ECO:0000305" key="9"/>
<evidence type="ECO:0000305" key="10">
    <source>
    </source>
</evidence>
<evidence type="ECO:0007744" key="11">
    <source>
    </source>
</evidence>
<evidence type="ECO:0007744" key="12">
    <source>
    </source>
</evidence>
<keyword id="KW-0025">Alternative splicing</keyword>
<keyword id="KW-0507">mRNA processing</keyword>
<keyword id="KW-0508">mRNA splicing</keyword>
<keyword id="KW-0539">Nucleus</keyword>
<keyword id="KW-0597">Phosphoprotein</keyword>
<keyword id="KW-1185">Reference proteome</keyword>
<keyword id="KW-0694">RNA-binding</keyword>
<keyword id="KW-0747">Spliceosome</keyword>